<keyword id="KW-0378">Hydrolase</keyword>
<keyword id="KW-0479">Metal-binding</keyword>
<keyword id="KW-1185">Reference proteome</keyword>
<keyword id="KW-0862">Zinc</keyword>
<name>CDD_SALTY</name>
<reference key="1">
    <citation type="journal article" date="2001" name="Nature">
        <title>Complete genome sequence of Salmonella enterica serovar Typhimurium LT2.</title>
        <authorList>
            <person name="McClelland M."/>
            <person name="Sanderson K.E."/>
            <person name="Spieth J."/>
            <person name="Clifton S.W."/>
            <person name="Latreille P."/>
            <person name="Courtney L."/>
            <person name="Porwollik S."/>
            <person name="Ali J."/>
            <person name="Dante M."/>
            <person name="Du F."/>
            <person name="Hou S."/>
            <person name="Layman D."/>
            <person name="Leonard S."/>
            <person name="Nguyen C."/>
            <person name="Scott K."/>
            <person name="Holmes A."/>
            <person name="Grewal N."/>
            <person name="Mulvaney E."/>
            <person name="Ryan E."/>
            <person name="Sun H."/>
            <person name="Florea L."/>
            <person name="Miller W."/>
            <person name="Stoneking T."/>
            <person name="Nhan M."/>
            <person name="Waterston R."/>
            <person name="Wilson R.K."/>
        </authorList>
    </citation>
    <scope>NUCLEOTIDE SEQUENCE [LARGE SCALE GENOMIC DNA]</scope>
    <source>
        <strain>LT2 / SGSC1412 / ATCC 700720</strain>
    </source>
</reference>
<dbReference type="EC" id="3.5.4.5" evidence="1"/>
<dbReference type="EMBL" id="AE006468">
    <property type="protein sequence ID" value="AAL21087.1"/>
    <property type="molecule type" value="Genomic_DNA"/>
</dbReference>
<dbReference type="RefSeq" id="NP_461128.1">
    <property type="nucleotide sequence ID" value="NC_003197.2"/>
</dbReference>
<dbReference type="RefSeq" id="WP_000553526.1">
    <property type="nucleotide sequence ID" value="NC_003197.2"/>
</dbReference>
<dbReference type="SMR" id="Q8ZNM0"/>
<dbReference type="STRING" id="99287.STM2183"/>
<dbReference type="PaxDb" id="99287-STM2183"/>
<dbReference type="GeneID" id="1253705"/>
<dbReference type="KEGG" id="stm:STM2183"/>
<dbReference type="PATRIC" id="fig|99287.12.peg.2310"/>
<dbReference type="HOGENOM" id="CLU_052424_0_0_6"/>
<dbReference type="OMA" id="NYSPCGH"/>
<dbReference type="PhylomeDB" id="Q8ZNM0"/>
<dbReference type="BioCyc" id="SENT99287:STM2183-MONOMER"/>
<dbReference type="Proteomes" id="UP000001014">
    <property type="component" value="Chromosome"/>
</dbReference>
<dbReference type="GO" id="GO:0005829">
    <property type="term" value="C:cytosol"/>
    <property type="evidence" value="ECO:0000318"/>
    <property type="project" value="GO_Central"/>
</dbReference>
<dbReference type="GO" id="GO:0004126">
    <property type="term" value="F:cytidine deaminase activity"/>
    <property type="evidence" value="ECO:0000318"/>
    <property type="project" value="GO_Central"/>
</dbReference>
<dbReference type="GO" id="GO:0042802">
    <property type="term" value="F:identical protein binding"/>
    <property type="evidence" value="ECO:0007669"/>
    <property type="project" value="UniProtKB-ARBA"/>
</dbReference>
<dbReference type="GO" id="GO:0008270">
    <property type="term" value="F:zinc ion binding"/>
    <property type="evidence" value="ECO:0000318"/>
    <property type="project" value="GO_Central"/>
</dbReference>
<dbReference type="GO" id="GO:0009972">
    <property type="term" value="P:cytidine deamination"/>
    <property type="evidence" value="ECO:0000318"/>
    <property type="project" value="GO_Central"/>
</dbReference>
<dbReference type="CDD" id="cd01283">
    <property type="entry name" value="cytidine_deaminase"/>
    <property type="match status" value="2"/>
</dbReference>
<dbReference type="FunFam" id="3.40.140.10:FF:000006">
    <property type="entry name" value="Cytidine deaminase"/>
    <property type="match status" value="1"/>
</dbReference>
<dbReference type="FunFam" id="3.40.140.10:FF:000007">
    <property type="entry name" value="Cytidine deaminase"/>
    <property type="match status" value="1"/>
</dbReference>
<dbReference type="Gene3D" id="3.40.140.10">
    <property type="entry name" value="Cytidine Deaminase, domain 2"/>
    <property type="match status" value="2"/>
</dbReference>
<dbReference type="HAMAP" id="MF_01558">
    <property type="entry name" value="Cyt_deam"/>
    <property type="match status" value="1"/>
</dbReference>
<dbReference type="InterPro" id="IPR016192">
    <property type="entry name" value="APOBEC/CMP_deaminase_Zn-bd"/>
</dbReference>
<dbReference type="InterPro" id="IPR002125">
    <property type="entry name" value="CMP_dCMP_dom"/>
</dbReference>
<dbReference type="InterPro" id="IPR013171">
    <property type="entry name" value="Cyd/dCyd_deaminase_Zn-bd"/>
</dbReference>
<dbReference type="InterPro" id="IPR050202">
    <property type="entry name" value="Cyt/Deoxycyt_deaminase"/>
</dbReference>
<dbReference type="InterPro" id="IPR006263">
    <property type="entry name" value="Cyt_deam_dimer"/>
</dbReference>
<dbReference type="InterPro" id="IPR016193">
    <property type="entry name" value="Cytidine_deaminase-like"/>
</dbReference>
<dbReference type="InterPro" id="IPR020797">
    <property type="entry name" value="Cytidine_deaminase_bacteria"/>
</dbReference>
<dbReference type="NCBIfam" id="TIGR01355">
    <property type="entry name" value="cyt_deam_dimer"/>
    <property type="match status" value="1"/>
</dbReference>
<dbReference type="NCBIfam" id="NF006537">
    <property type="entry name" value="PRK09027.1"/>
    <property type="match status" value="1"/>
</dbReference>
<dbReference type="PANTHER" id="PTHR11644">
    <property type="entry name" value="CYTIDINE DEAMINASE"/>
    <property type="match status" value="1"/>
</dbReference>
<dbReference type="PANTHER" id="PTHR11644:SF2">
    <property type="entry name" value="CYTIDINE DEAMINASE"/>
    <property type="match status" value="1"/>
</dbReference>
<dbReference type="Pfam" id="PF00383">
    <property type="entry name" value="dCMP_cyt_deam_1"/>
    <property type="match status" value="1"/>
</dbReference>
<dbReference type="Pfam" id="PF08211">
    <property type="entry name" value="dCMP_cyt_deam_2"/>
    <property type="match status" value="1"/>
</dbReference>
<dbReference type="PIRSF" id="PIRSF006334">
    <property type="entry name" value="Cdd_plus_pseudo"/>
    <property type="match status" value="1"/>
</dbReference>
<dbReference type="SUPFAM" id="SSF53927">
    <property type="entry name" value="Cytidine deaminase-like"/>
    <property type="match status" value="2"/>
</dbReference>
<dbReference type="PROSITE" id="PS00903">
    <property type="entry name" value="CYT_DCMP_DEAMINASES_1"/>
    <property type="match status" value="1"/>
</dbReference>
<dbReference type="PROSITE" id="PS51747">
    <property type="entry name" value="CYT_DCMP_DEAMINASES_2"/>
    <property type="match status" value="2"/>
</dbReference>
<comment type="function">
    <text evidence="1">This enzyme scavenges exogenous and endogenous cytidine and 2'-deoxycytidine for UMP synthesis.</text>
</comment>
<comment type="catalytic activity">
    <reaction evidence="1">
        <text>cytidine + H2O + H(+) = uridine + NH4(+)</text>
        <dbReference type="Rhea" id="RHEA:16069"/>
        <dbReference type="ChEBI" id="CHEBI:15377"/>
        <dbReference type="ChEBI" id="CHEBI:15378"/>
        <dbReference type="ChEBI" id="CHEBI:16704"/>
        <dbReference type="ChEBI" id="CHEBI:17562"/>
        <dbReference type="ChEBI" id="CHEBI:28938"/>
        <dbReference type="EC" id="3.5.4.5"/>
    </reaction>
</comment>
<comment type="catalytic activity">
    <reaction evidence="1">
        <text>2'-deoxycytidine + H2O + H(+) = 2'-deoxyuridine + NH4(+)</text>
        <dbReference type="Rhea" id="RHEA:13433"/>
        <dbReference type="ChEBI" id="CHEBI:15377"/>
        <dbReference type="ChEBI" id="CHEBI:15378"/>
        <dbReference type="ChEBI" id="CHEBI:15698"/>
        <dbReference type="ChEBI" id="CHEBI:16450"/>
        <dbReference type="ChEBI" id="CHEBI:28938"/>
        <dbReference type="EC" id="3.5.4.5"/>
    </reaction>
</comment>
<comment type="cofactor">
    <cofactor evidence="1">
        <name>Zn(2+)</name>
        <dbReference type="ChEBI" id="CHEBI:29105"/>
    </cofactor>
    <text evidence="1">Binds 1 zinc ion.</text>
</comment>
<comment type="subunit">
    <text evidence="1">Homodimer.</text>
</comment>
<comment type="similarity">
    <text evidence="1">Belongs to the cytidine and deoxycytidylate deaminase family.</text>
</comment>
<proteinExistence type="inferred from homology"/>
<evidence type="ECO:0000255" key="1">
    <source>
        <dbReference type="HAMAP-Rule" id="MF_01558"/>
    </source>
</evidence>
<evidence type="ECO:0000255" key="2">
    <source>
        <dbReference type="PROSITE-ProRule" id="PRU01083"/>
    </source>
</evidence>
<accession>Q8ZNM0</accession>
<feature type="chain" id="PRO_0000171663" description="Cytidine deaminase">
    <location>
        <begin position="1"/>
        <end position="294"/>
    </location>
</feature>
<feature type="domain" description="CMP/dCMP-type deaminase 1" evidence="2">
    <location>
        <begin position="48"/>
        <end position="168"/>
    </location>
</feature>
<feature type="domain" description="CMP/dCMP-type deaminase 2" evidence="2">
    <location>
        <begin position="186"/>
        <end position="294"/>
    </location>
</feature>
<feature type="active site" description="Proton donor" evidence="1">
    <location>
        <position position="104"/>
    </location>
</feature>
<feature type="binding site" evidence="1">
    <location>
        <begin position="89"/>
        <end position="91"/>
    </location>
    <ligand>
        <name>substrate</name>
    </ligand>
</feature>
<feature type="binding site" evidence="1">
    <location>
        <position position="102"/>
    </location>
    <ligand>
        <name>Zn(2+)</name>
        <dbReference type="ChEBI" id="CHEBI:29105"/>
        <note>catalytic</note>
    </ligand>
</feature>
<feature type="binding site" evidence="1">
    <location>
        <position position="129"/>
    </location>
    <ligand>
        <name>Zn(2+)</name>
        <dbReference type="ChEBI" id="CHEBI:29105"/>
        <note>catalytic</note>
    </ligand>
</feature>
<feature type="binding site" evidence="1">
    <location>
        <position position="132"/>
    </location>
    <ligand>
        <name>Zn(2+)</name>
        <dbReference type="ChEBI" id="CHEBI:29105"/>
        <note>catalytic</note>
    </ligand>
</feature>
<protein>
    <recommendedName>
        <fullName evidence="1">Cytidine deaminase</fullName>
        <ecNumber evidence="1">3.5.4.5</ecNumber>
    </recommendedName>
    <alternativeName>
        <fullName evidence="1">Cytidine aminohydrolase</fullName>
        <shortName evidence="1">CDA</shortName>
    </alternativeName>
</protein>
<gene>
    <name evidence="1" type="primary">cdd</name>
    <name type="ordered locus">STM2183</name>
</gene>
<organism>
    <name type="scientific">Salmonella typhimurium (strain LT2 / SGSC1412 / ATCC 700720)</name>
    <dbReference type="NCBI Taxonomy" id="99287"/>
    <lineage>
        <taxon>Bacteria</taxon>
        <taxon>Pseudomonadati</taxon>
        <taxon>Pseudomonadota</taxon>
        <taxon>Gammaproteobacteria</taxon>
        <taxon>Enterobacterales</taxon>
        <taxon>Enterobacteriaceae</taxon>
        <taxon>Salmonella</taxon>
    </lineage>
</organism>
<sequence length="294" mass="31619">MHPRFQTAFAQLADNLQSALAPILADHHFPAMLTAEQVSTLKNTAGLDEDALAFALLPLAAACARTDLSHFNVGAIARGVSGNWYFGANMEFLGATMQQTVHAEQSAISHAWLRGEKGLAAVTVNYTPCGHCRQFMNELNSGLDLRIHLPGRAPHTLRDYLPDAFGPKDLEIKTLLMDEQDHGFTLTGDTLTQAAITAANKSHMPYSHSPSGVALECKDGRIFTGSYAENAAFNPTLPPLQGALNLLSLNGYDYADIQRAILAEKGDAALIQWDATAATLKALGCHNIDRVLLG</sequence>